<proteinExistence type="inferred from homology"/>
<gene>
    <name type="ordered locus">Bamb_0737</name>
</gene>
<feature type="chain" id="PRO_1000046644" description="UPF0301 protein Bamb_0737">
    <location>
        <begin position="1"/>
        <end position="192"/>
    </location>
</feature>
<organism>
    <name type="scientific">Burkholderia ambifaria (strain ATCC BAA-244 / DSM 16087 / CCUG 44356 / LMG 19182 / AMMD)</name>
    <name type="common">Burkholderia cepacia (strain AMMD)</name>
    <dbReference type="NCBI Taxonomy" id="339670"/>
    <lineage>
        <taxon>Bacteria</taxon>
        <taxon>Pseudomonadati</taxon>
        <taxon>Pseudomonadota</taxon>
        <taxon>Betaproteobacteria</taxon>
        <taxon>Burkholderiales</taxon>
        <taxon>Burkholderiaceae</taxon>
        <taxon>Burkholderia</taxon>
        <taxon>Burkholderia cepacia complex</taxon>
    </lineage>
</organism>
<accession>Q0BHS7</accession>
<sequence length="192" mass="20683">MSKPSDRINLTNQFLIAMPNMADPTFSGTVVYLCDHSERGALGLVINRPTDIDLESLFNRIDLKLDIEPLLHIPVYFGGPVQTERGFVLHEPVEGANYNSSMSVEGGLEMTTSKDVLEAVATGTGPKRFLLTLGHAGWGAGQLEEEISRNGWLTVAADPRIVFDTPAEERFEAALGLLGVSSSMLSGEAGHA</sequence>
<name>Y737_BURCM</name>
<dbReference type="EMBL" id="CP000440">
    <property type="protein sequence ID" value="ABI86296.1"/>
    <property type="molecule type" value="Genomic_DNA"/>
</dbReference>
<dbReference type="RefSeq" id="WP_006751106.1">
    <property type="nucleotide sequence ID" value="NZ_CP009798.1"/>
</dbReference>
<dbReference type="SMR" id="Q0BHS7"/>
<dbReference type="KEGG" id="bam:Bamb_0737"/>
<dbReference type="PATRIC" id="fig|339670.21.peg.857"/>
<dbReference type="eggNOG" id="COG1678">
    <property type="taxonomic scope" value="Bacteria"/>
</dbReference>
<dbReference type="Proteomes" id="UP000000662">
    <property type="component" value="Chromosome 1"/>
</dbReference>
<dbReference type="GO" id="GO:0005829">
    <property type="term" value="C:cytosol"/>
    <property type="evidence" value="ECO:0007669"/>
    <property type="project" value="TreeGrafter"/>
</dbReference>
<dbReference type="Gene3D" id="3.40.1740.10">
    <property type="entry name" value="VC0467-like"/>
    <property type="match status" value="1"/>
</dbReference>
<dbReference type="HAMAP" id="MF_00758">
    <property type="entry name" value="UPF0301"/>
    <property type="match status" value="1"/>
</dbReference>
<dbReference type="InterPro" id="IPR003774">
    <property type="entry name" value="AlgH-like"/>
</dbReference>
<dbReference type="NCBIfam" id="NF001266">
    <property type="entry name" value="PRK00228.1-1"/>
    <property type="match status" value="1"/>
</dbReference>
<dbReference type="NCBIfam" id="NF001267">
    <property type="entry name" value="PRK00228.1-2"/>
    <property type="match status" value="1"/>
</dbReference>
<dbReference type="PANTHER" id="PTHR30327">
    <property type="entry name" value="UNCHARACTERIZED PROTEIN YQGE"/>
    <property type="match status" value="1"/>
</dbReference>
<dbReference type="PANTHER" id="PTHR30327:SF1">
    <property type="entry name" value="UPF0301 PROTEIN YQGE"/>
    <property type="match status" value="1"/>
</dbReference>
<dbReference type="Pfam" id="PF02622">
    <property type="entry name" value="DUF179"/>
    <property type="match status" value="1"/>
</dbReference>
<dbReference type="SUPFAM" id="SSF143456">
    <property type="entry name" value="VC0467-like"/>
    <property type="match status" value="1"/>
</dbReference>
<reference key="1">
    <citation type="submission" date="2006-08" db="EMBL/GenBank/DDBJ databases">
        <title>Complete sequence of chromosome 1 of Burkholderia cepacia AMMD.</title>
        <authorList>
            <person name="Copeland A."/>
            <person name="Lucas S."/>
            <person name="Lapidus A."/>
            <person name="Barry K."/>
            <person name="Detter J.C."/>
            <person name="Glavina del Rio T."/>
            <person name="Hammon N."/>
            <person name="Israni S."/>
            <person name="Pitluck S."/>
            <person name="Bruce D."/>
            <person name="Chain P."/>
            <person name="Malfatti S."/>
            <person name="Shin M."/>
            <person name="Vergez L."/>
            <person name="Schmutz J."/>
            <person name="Larimer F."/>
            <person name="Land M."/>
            <person name="Hauser L."/>
            <person name="Kyrpides N."/>
            <person name="Kim E."/>
            <person name="Parke J."/>
            <person name="Coenye T."/>
            <person name="Konstantinidis K."/>
            <person name="Ramette A."/>
            <person name="Tiedje J."/>
            <person name="Richardson P."/>
        </authorList>
    </citation>
    <scope>NUCLEOTIDE SEQUENCE [LARGE SCALE GENOMIC DNA]</scope>
    <source>
        <strain>ATCC BAA-244 / DSM 16087 / CCUG 44356 / LMG 19182 / AMMD</strain>
    </source>
</reference>
<protein>
    <recommendedName>
        <fullName evidence="1">UPF0301 protein Bamb_0737</fullName>
    </recommendedName>
</protein>
<evidence type="ECO:0000255" key="1">
    <source>
        <dbReference type="HAMAP-Rule" id="MF_00758"/>
    </source>
</evidence>
<comment type="similarity">
    <text evidence="1">Belongs to the UPF0301 (AlgH) family.</text>
</comment>